<accession>A2QTE7</accession>
<sequence length="443" mass="48506">MSTDSIEVAIIGAGITGITLALGLLSRGIPVRVYERARDFHEIGAGIGFTPNAEWAMKVVDPRIQAAFKRVATPNASDWFQWVDGFNESGTDPRETEEQLLFKIYLGERGFEGCHRADFLGELARLLPEGVVTFQKALDTVEPAADNSLGQLLRFQDGTTATAHAVIGCDGIRSRVRQILLGEDHPAASAHYSHKYAARGLIPMDRAREALGEDKVATRFMHLGPDAHALTFPVSHGSLLNVVAFVTDPNPWPYADRWTAQGPKEDVTAAFSRFGPTMRTIIDLLPDPIDQWAVFDTYDHPPNTYSRGAVCIAGDAAHAAAPHHGAGAGCGVEDAAVLCAVLDMAAKRVDTAKDGTEGKAALITTAFETYDAVRRERAQWLVESSRVIGNLYEWQDKEVGSDASRCHDEVYWRSHRIWDYDIDAMMRETAEVFEARVAGVAKN</sequence>
<dbReference type="EC" id="1.-.-.-" evidence="8"/>
<dbReference type="EMBL" id="AM270194">
    <property type="protein sequence ID" value="CAK40122.1"/>
    <property type="molecule type" value="Genomic_DNA"/>
</dbReference>
<dbReference type="RefSeq" id="XP_001393499.2">
    <property type="nucleotide sequence ID" value="XM_001393462.2"/>
</dbReference>
<dbReference type="SMR" id="A2QTE7"/>
<dbReference type="GlyCosmos" id="A2QTE7">
    <property type="glycosylation" value="2 sites, No reported glycans"/>
</dbReference>
<dbReference type="EnsemblFungi" id="CAK40122">
    <property type="protein sequence ID" value="CAK40122"/>
    <property type="gene ID" value="An09g01840"/>
</dbReference>
<dbReference type="GeneID" id="4983715"/>
<dbReference type="KEGG" id="ang:An09g01840"/>
<dbReference type="VEuPathDB" id="FungiDB:An09g01840"/>
<dbReference type="HOGENOM" id="CLU_009665_6_3_1"/>
<dbReference type="Proteomes" id="UP000006706">
    <property type="component" value="Chromosome 1L"/>
</dbReference>
<dbReference type="GO" id="GO:0016020">
    <property type="term" value="C:membrane"/>
    <property type="evidence" value="ECO:0007669"/>
    <property type="project" value="UniProtKB-SubCell"/>
</dbReference>
<dbReference type="GO" id="GO:0071949">
    <property type="term" value="F:FAD binding"/>
    <property type="evidence" value="ECO:0007669"/>
    <property type="project" value="InterPro"/>
</dbReference>
<dbReference type="GO" id="GO:0004497">
    <property type="term" value="F:monooxygenase activity"/>
    <property type="evidence" value="ECO:0007669"/>
    <property type="project" value="UniProtKB-KW"/>
</dbReference>
<dbReference type="GO" id="GO:0044550">
    <property type="term" value="P:secondary metabolite biosynthetic process"/>
    <property type="evidence" value="ECO:0007669"/>
    <property type="project" value="TreeGrafter"/>
</dbReference>
<dbReference type="FunFam" id="3.50.50.60:FF:000153">
    <property type="entry name" value="Salicylate hydroxylase, putative"/>
    <property type="match status" value="1"/>
</dbReference>
<dbReference type="Gene3D" id="3.50.50.60">
    <property type="entry name" value="FAD/NAD(P)-binding domain"/>
    <property type="match status" value="1"/>
</dbReference>
<dbReference type="InterPro" id="IPR002938">
    <property type="entry name" value="FAD-bd"/>
</dbReference>
<dbReference type="InterPro" id="IPR036188">
    <property type="entry name" value="FAD/NAD-bd_sf"/>
</dbReference>
<dbReference type="InterPro" id="IPR051104">
    <property type="entry name" value="FAD_monoxygenase"/>
</dbReference>
<dbReference type="PANTHER" id="PTHR46720:SF3">
    <property type="entry name" value="FAD-BINDING DOMAIN-CONTAINING PROTEIN-RELATED"/>
    <property type="match status" value="1"/>
</dbReference>
<dbReference type="PANTHER" id="PTHR46720">
    <property type="entry name" value="HYDROXYLASE, PUTATIVE (AFU_ORTHOLOGUE AFUA_3G01460)-RELATED"/>
    <property type="match status" value="1"/>
</dbReference>
<dbReference type="Pfam" id="PF01494">
    <property type="entry name" value="FAD_binding_3"/>
    <property type="match status" value="1"/>
</dbReference>
<dbReference type="PRINTS" id="PR00420">
    <property type="entry name" value="RNGMNOXGNASE"/>
</dbReference>
<dbReference type="SUPFAM" id="SSF54373">
    <property type="entry name" value="FAD-linked reductases, C-terminal domain"/>
    <property type="match status" value="1"/>
</dbReference>
<dbReference type="SUPFAM" id="SSF51905">
    <property type="entry name" value="FAD/NAD(P)-binding domain"/>
    <property type="match status" value="1"/>
</dbReference>
<keyword id="KW-0274">FAD</keyword>
<keyword id="KW-0285">Flavoprotein</keyword>
<keyword id="KW-0325">Glycoprotein</keyword>
<keyword id="KW-0472">Membrane</keyword>
<keyword id="KW-0503">Monooxygenase</keyword>
<keyword id="KW-0560">Oxidoreductase</keyword>
<keyword id="KW-1185">Reference proteome</keyword>
<keyword id="KW-0812">Transmembrane</keyword>
<keyword id="KW-1133">Transmembrane helix</keyword>
<protein>
    <recommendedName>
        <fullName evidence="6">FAD-dependent monooxygenase orf3</fullName>
        <ecNumber evidence="8">1.-.-.-</ecNumber>
    </recommendedName>
    <alternativeName>
        <fullName evidence="6">Pestalamide A biosynthesis cluster protein orf3</fullName>
    </alternativeName>
</protein>
<organism>
    <name type="scientific">Aspergillus niger (strain ATCC MYA-4892 / CBS 513.88 / FGSC A1513)</name>
    <dbReference type="NCBI Taxonomy" id="425011"/>
    <lineage>
        <taxon>Eukaryota</taxon>
        <taxon>Fungi</taxon>
        <taxon>Dikarya</taxon>
        <taxon>Ascomycota</taxon>
        <taxon>Pezizomycotina</taxon>
        <taxon>Eurotiomycetes</taxon>
        <taxon>Eurotiomycetidae</taxon>
        <taxon>Eurotiales</taxon>
        <taxon>Aspergillaceae</taxon>
        <taxon>Aspergillus</taxon>
        <taxon>Aspergillus subgen. Circumdati</taxon>
    </lineage>
</organism>
<proteinExistence type="inferred from homology"/>
<comment type="function">
    <text evidence="5 8">FAD-dependent monooxygenase; part of the gene cluster that mediates the biosynthesis of nigerpyrone and its derivatives carbonarone A and pestalamide A (PubMed:30384904). The biosynthesis pathway begins with the polyketide assembly by epaA to form phenylacetyl triketide precursor from successive condensation of two malonyl-CoA, presumably with one phenylacetyl-CoA starter unit produced by the phenylacetyl-CoA ligase epaB (PubMed:30384904). For the nigerpyrone biosynthesis, the reactive polyketide chain is released as an aldehyde through the R-domain. A nonenzymatic cyclization and dehydration may create nigerpyrone (PubMed:30384904). For the biosynthesis of carbonarone A and pestalamide A, an extra methyl group is added through the C-methyltransferase domain. Several further steps involving the dehydrogenase orf1, the cytochrome P450 monooxygenase orf2 and the FAD-dependent monooxygenase orf3 are required to form a carbonarone A precursor which is converted to carbonarone A via cyclization (PubMed:30384904). The O-acetyltransferase epaC could catalyze the transfer of 2-methylsuccinyl-CoA, a common intermediate in the ethylmalonyl-CoA pathway, to generate the final product pestalamide A (Probable).</text>
</comment>
<comment type="cofactor">
    <cofactor evidence="1">
        <name>FAD</name>
        <dbReference type="ChEBI" id="CHEBI:57692"/>
    </cofactor>
</comment>
<comment type="pathway">
    <text evidence="8">Secondary metabolite biosynthesis.</text>
</comment>
<comment type="subcellular location">
    <subcellularLocation>
        <location evidence="3">Membrane</location>
        <topology evidence="3">Single-pass membrane protein</topology>
    </subcellularLocation>
</comment>
<comment type="similarity">
    <text evidence="7">Belongs to the paxM FAD-dependent monooxygenase family.</text>
</comment>
<reference key="1">
    <citation type="journal article" date="2007" name="Nat. Biotechnol.">
        <title>Genome sequencing and analysis of the versatile cell factory Aspergillus niger CBS 513.88.</title>
        <authorList>
            <person name="Pel H.J."/>
            <person name="de Winde J.H."/>
            <person name="Archer D.B."/>
            <person name="Dyer P.S."/>
            <person name="Hofmann G."/>
            <person name="Schaap P.J."/>
            <person name="Turner G."/>
            <person name="de Vries R.P."/>
            <person name="Albang R."/>
            <person name="Albermann K."/>
            <person name="Andersen M.R."/>
            <person name="Bendtsen J.D."/>
            <person name="Benen J.A.E."/>
            <person name="van den Berg M."/>
            <person name="Breestraat S."/>
            <person name="Caddick M.X."/>
            <person name="Contreras R."/>
            <person name="Cornell M."/>
            <person name="Coutinho P.M."/>
            <person name="Danchin E.G.J."/>
            <person name="Debets A.J.M."/>
            <person name="Dekker P."/>
            <person name="van Dijck P.W.M."/>
            <person name="van Dijk A."/>
            <person name="Dijkhuizen L."/>
            <person name="Driessen A.J.M."/>
            <person name="d'Enfert C."/>
            <person name="Geysens S."/>
            <person name="Goosen C."/>
            <person name="Groot G.S.P."/>
            <person name="de Groot P.W.J."/>
            <person name="Guillemette T."/>
            <person name="Henrissat B."/>
            <person name="Herweijer M."/>
            <person name="van den Hombergh J.P.T.W."/>
            <person name="van den Hondel C.A.M.J.J."/>
            <person name="van der Heijden R.T.J.M."/>
            <person name="van der Kaaij R.M."/>
            <person name="Klis F.M."/>
            <person name="Kools H.J."/>
            <person name="Kubicek C.P."/>
            <person name="van Kuyk P.A."/>
            <person name="Lauber J."/>
            <person name="Lu X."/>
            <person name="van der Maarel M.J.E.C."/>
            <person name="Meulenberg R."/>
            <person name="Menke H."/>
            <person name="Mortimer M.A."/>
            <person name="Nielsen J."/>
            <person name="Oliver S.G."/>
            <person name="Olsthoorn M."/>
            <person name="Pal K."/>
            <person name="van Peij N.N.M.E."/>
            <person name="Ram A.F.J."/>
            <person name="Rinas U."/>
            <person name="Roubos J.A."/>
            <person name="Sagt C.M.J."/>
            <person name="Schmoll M."/>
            <person name="Sun J."/>
            <person name="Ussery D."/>
            <person name="Varga J."/>
            <person name="Vervecken W."/>
            <person name="van de Vondervoort P.J.J."/>
            <person name="Wedler H."/>
            <person name="Woesten H.A.B."/>
            <person name="Zeng A.-P."/>
            <person name="van Ooyen A.J.J."/>
            <person name="Visser J."/>
            <person name="Stam H."/>
        </authorList>
    </citation>
    <scope>NUCLEOTIDE SEQUENCE [LARGE SCALE GENOMIC DNA]</scope>
    <source>
        <strain>ATCC MYA-4892 / CBS 513.88 / FGSC A1513</strain>
    </source>
</reference>
<reference key="2">
    <citation type="journal article" date="2018" name="Microbiol. Res.">
        <title>Deletion of the epigenetic regulator GcnE in Aspergillus niger FGSC A1279 activates the production of multiple polyketide metabolites.</title>
        <authorList>
            <person name="Wang B."/>
            <person name="Li X."/>
            <person name="Yu D."/>
            <person name="Chen X."/>
            <person name="Tabudravu J."/>
            <person name="Deng H."/>
            <person name="Pan L."/>
        </authorList>
    </citation>
    <scope>IDENTIFICATION</scope>
    <scope>FUNCTION</scope>
    <scope>PATHWAY</scope>
</reference>
<name>EPAD_ASPNC</name>
<gene>
    <name evidence="6" type="primary">orf3</name>
    <name type="ORF">An09g01840</name>
</gene>
<evidence type="ECO:0000250" key="1">
    <source>
        <dbReference type="UniProtKB" id="A6T923"/>
    </source>
</evidence>
<evidence type="ECO:0000250" key="2">
    <source>
        <dbReference type="UniProtKB" id="B8M9J8"/>
    </source>
</evidence>
<evidence type="ECO:0000255" key="3"/>
<evidence type="ECO:0000255" key="4">
    <source>
        <dbReference type="PROSITE-ProRule" id="PRU00498"/>
    </source>
</evidence>
<evidence type="ECO:0000269" key="5">
    <source>
    </source>
</evidence>
<evidence type="ECO:0000303" key="6">
    <source>
    </source>
</evidence>
<evidence type="ECO:0000305" key="7"/>
<evidence type="ECO:0000305" key="8">
    <source>
    </source>
</evidence>
<feature type="chain" id="PRO_0000446157" description="FAD-dependent monooxygenase orf3">
    <location>
        <begin position="1"/>
        <end position="443"/>
    </location>
</feature>
<feature type="transmembrane region" description="Helical" evidence="3">
    <location>
        <begin position="5"/>
        <end position="25"/>
    </location>
</feature>
<feature type="active site" evidence="2">
    <location>
        <position position="199"/>
    </location>
</feature>
<feature type="binding site" evidence="2">
    <location>
        <position position="35"/>
    </location>
    <ligand>
        <name>FAD</name>
        <dbReference type="ChEBI" id="CHEBI:57692"/>
    </ligand>
</feature>
<feature type="binding site" evidence="2">
    <location>
        <position position="48"/>
    </location>
    <ligand>
        <name>FAD</name>
        <dbReference type="ChEBI" id="CHEBI:57692"/>
    </ligand>
</feature>
<feature type="binding site" evidence="2">
    <location>
        <position position="116"/>
    </location>
    <ligand>
        <name>FAD</name>
        <dbReference type="ChEBI" id="CHEBI:57692"/>
    </ligand>
</feature>
<feature type="binding site" evidence="2">
    <location>
        <position position="315"/>
    </location>
    <ligand>
        <name>FAD</name>
        <dbReference type="ChEBI" id="CHEBI:57692"/>
    </ligand>
</feature>
<feature type="binding site" evidence="2">
    <location>
        <position position="328"/>
    </location>
    <ligand>
        <name>FAD</name>
        <dbReference type="ChEBI" id="CHEBI:57692"/>
    </ligand>
</feature>
<feature type="glycosylation site" description="N-linked (GlcNAc...) asparagine" evidence="4">
    <location>
        <position position="75"/>
    </location>
</feature>
<feature type="glycosylation site" description="N-linked (GlcNAc...) asparagine" evidence="4">
    <location>
        <position position="87"/>
    </location>
</feature>